<proteinExistence type="inferred from homology"/>
<accession>Q4G3B8</accession>
<gene>
    <name evidence="1" type="primary">psaJ</name>
</gene>
<protein>
    <recommendedName>
        <fullName evidence="1">Photosystem I reaction center subunit IX</fullName>
    </recommendedName>
    <alternativeName>
        <fullName evidence="1">PSI-J</fullName>
    </alternativeName>
</protein>
<comment type="function">
    <text evidence="1">May help in the organization of the PsaE and PsaF subunits.</text>
</comment>
<comment type="subcellular location">
    <subcellularLocation>
        <location evidence="1">Plastid</location>
        <location evidence="1">Chloroplast thylakoid membrane</location>
        <topology evidence="1">Single-pass membrane protein</topology>
    </subcellularLocation>
</comment>
<comment type="similarity">
    <text evidence="1">Belongs to the PsaJ family.</text>
</comment>
<organism>
    <name type="scientific">Emiliania huxleyi</name>
    <name type="common">Coccolithophore</name>
    <name type="synonym">Pontosphaera huxleyi</name>
    <dbReference type="NCBI Taxonomy" id="2903"/>
    <lineage>
        <taxon>Eukaryota</taxon>
        <taxon>Haptista</taxon>
        <taxon>Haptophyta</taxon>
        <taxon>Prymnesiophyceae</taxon>
        <taxon>Isochrysidales</taxon>
        <taxon>Noelaerhabdaceae</taxon>
        <taxon>Emiliania</taxon>
    </lineage>
</organism>
<dbReference type="EMBL" id="AY741371">
    <property type="protein sequence ID" value="AAX13848.1"/>
    <property type="molecule type" value="Genomic_DNA"/>
</dbReference>
<dbReference type="RefSeq" id="YP_277349.1">
    <property type="nucleotide sequence ID" value="NC_007288.1"/>
</dbReference>
<dbReference type="SMR" id="Q4G3B8"/>
<dbReference type="STRING" id="2903.Q4G3B8"/>
<dbReference type="GeneID" id="3562421"/>
<dbReference type="GO" id="GO:0009535">
    <property type="term" value="C:chloroplast thylakoid membrane"/>
    <property type="evidence" value="ECO:0007669"/>
    <property type="project" value="UniProtKB-SubCell"/>
</dbReference>
<dbReference type="GO" id="GO:0009522">
    <property type="term" value="C:photosystem I"/>
    <property type="evidence" value="ECO:0007669"/>
    <property type="project" value="UniProtKB-KW"/>
</dbReference>
<dbReference type="GO" id="GO:0015979">
    <property type="term" value="P:photosynthesis"/>
    <property type="evidence" value="ECO:0007669"/>
    <property type="project" value="UniProtKB-UniRule"/>
</dbReference>
<dbReference type="Gene3D" id="1.20.5.510">
    <property type="entry name" value="Single helix bin"/>
    <property type="match status" value="1"/>
</dbReference>
<dbReference type="HAMAP" id="MF_00522">
    <property type="entry name" value="PSI_PsaJ"/>
    <property type="match status" value="1"/>
</dbReference>
<dbReference type="InterPro" id="IPR002615">
    <property type="entry name" value="PSI_PsaJ"/>
</dbReference>
<dbReference type="InterPro" id="IPR036062">
    <property type="entry name" value="PSI_PsaJ_sf"/>
</dbReference>
<dbReference type="PANTHER" id="PTHR36082">
    <property type="match status" value="1"/>
</dbReference>
<dbReference type="PANTHER" id="PTHR36082:SF2">
    <property type="entry name" value="PHOTOSYSTEM I REACTION CENTER SUBUNIT IX"/>
    <property type="match status" value="1"/>
</dbReference>
<dbReference type="Pfam" id="PF01701">
    <property type="entry name" value="PSI_PsaJ"/>
    <property type="match status" value="1"/>
</dbReference>
<dbReference type="SUPFAM" id="SSF81544">
    <property type="entry name" value="Subunit IX of photosystem I reaction centre, PsaJ"/>
    <property type="match status" value="1"/>
</dbReference>
<feature type="chain" id="PRO_0000354173" description="Photosystem I reaction center subunit IX">
    <location>
        <begin position="1"/>
        <end position="40"/>
    </location>
</feature>
<feature type="transmembrane region" description="Helical" evidence="1">
    <location>
        <begin position="12"/>
        <end position="34"/>
    </location>
</feature>
<name>PSAJ_EMIHU</name>
<geneLocation type="chloroplast"/>
<evidence type="ECO:0000255" key="1">
    <source>
        <dbReference type="HAMAP-Rule" id="MF_00522"/>
    </source>
</evidence>
<reference key="1">
    <citation type="journal article" date="2005" name="DNA Res.">
        <title>The complete plastid genome sequence of the haptophyte Emiliania huxleyi: a comparison to other plastid genomes.</title>
        <authorList>
            <person name="Sanchez-Puerta M.V."/>
            <person name="Bachvaroff T.R."/>
            <person name="Delwiche C.F."/>
        </authorList>
    </citation>
    <scope>NUCLEOTIDE SEQUENCE [LARGE SCALE GENOMIC DNA]</scope>
    <source>
        <strain>CCMP373 / CSIRO-CS-57 / BT6</strain>
    </source>
</reference>
<sequence length="40" mass="4536">MSKDLLKYLSTAPVLLTAWMSLTAGMIIEIQRFFPDSLSF</sequence>
<keyword id="KW-0150">Chloroplast</keyword>
<keyword id="KW-0472">Membrane</keyword>
<keyword id="KW-0602">Photosynthesis</keyword>
<keyword id="KW-0603">Photosystem I</keyword>
<keyword id="KW-0934">Plastid</keyword>
<keyword id="KW-0793">Thylakoid</keyword>
<keyword id="KW-0812">Transmembrane</keyword>
<keyword id="KW-1133">Transmembrane helix</keyword>